<dbReference type="EMBL" id="BC123187">
    <property type="protein sequence ID" value="AAI23188.1"/>
    <property type="molecule type" value="mRNA"/>
</dbReference>
<dbReference type="RefSeq" id="NP_001090335.1">
    <property type="nucleotide sequence ID" value="NM_001096866.1"/>
</dbReference>
<dbReference type="SMR" id="Q0IHE5"/>
<dbReference type="DNASU" id="779245"/>
<dbReference type="GeneID" id="779245"/>
<dbReference type="KEGG" id="xla:779245"/>
<dbReference type="AGR" id="Xenbase:XB-GENE-17338188"/>
<dbReference type="CTD" id="779245"/>
<dbReference type="Xenbase" id="XB-GENE-17338188">
    <property type="gene designation" value="rilpl1.L"/>
</dbReference>
<dbReference type="OMA" id="SFGQWAD"/>
<dbReference type="OrthoDB" id="10069524at2759"/>
<dbReference type="Proteomes" id="UP000186698">
    <property type="component" value="Chromosome 1L"/>
</dbReference>
<dbReference type="Bgee" id="779245">
    <property type="expression patterns" value="Expressed in muscle tissue and 19 other cell types or tissues"/>
</dbReference>
<dbReference type="GO" id="GO:0005813">
    <property type="term" value="C:centrosome"/>
    <property type="evidence" value="ECO:0000250"/>
    <property type="project" value="UniProtKB"/>
</dbReference>
<dbReference type="GO" id="GO:0036064">
    <property type="term" value="C:ciliary basal body"/>
    <property type="evidence" value="ECO:0000318"/>
    <property type="project" value="GO_Central"/>
</dbReference>
<dbReference type="GO" id="GO:0005929">
    <property type="term" value="C:cilium"/>
    <property type="evidence" value="ECO:0000250"/>
    <property type="project" value="UniProtKB"/>
</dbReference>
<dbReference type="GO" id="GO:0005737">
    <property type="term" value="C:cytoplasm"/>
    <property type="evidence" value="ECO:0000318"/>
    <property type="project" value="GO_Central"/>
</dbReference>
<dbReference type="GO" id="GO:0005829">
    <property type="term" value="C:cytosol"/>
    <property type="evidence" value="ECO:0000250"/>
    <property type="project" value="UniProtKB"/>
</dbReference>
<dbReference type="GO" id="GO:0016020">
    <property type="term" value="C:membrane"/>
    <property type="evidence" value="ECO:0007669"/>
    <property type="project" value="GOC"/>
</dbReference>
<dbReference type="GO" id="GO:0051959">
    <property type="term" value="F:dynein light intermediate chain binding"/>
    <property type="evidence" value="ECO:0000318"/>
    <property type="project" value="GO_Central"/>
</dbReference>
<dbReference type="GO" id="GO:0046983">
    <property type="term" value="F:protein dimerization activity"/>
    <property type="evidence" value="ECO:0007669"/>
    <property type="project" value="InterPro"/>
</dbReference>
<dbReference type="GO" id="GO:0031267">
    <property type="term" value="F:small GTPase binding"/>
    <property type="evidence" value="ECO:0000318"/>
    <property type="project" value="GO_Central"/>
</dbReference>
<dbReference type="GO" id="GO:0060271">
    <property type="term" value="P:cilium assembly"/>
    <property type="evidence" value="ECO:0000318"/>
    <property type="project" value="GO_Central"/>
</dbReference>
<dbReference type="GO" id="GO:0003382">
    <property type="term" value="P:epithelial cell morphogenesis"/>
    <property type="evidence" value="ECO:0000250"/>
    <property type="project" value="UniProtKB"/>
</dbReference>
<dbReference type="GO" id="GO:0007263">
    <property type="term" value="P:nitric oxide mediated signal transduction"/>
    <property type="evidence" value="ECO:0000250"/>
    <property type="project" value="UniProtKB"/>
</dbReference>
<dbReference type="GO" id="GO:1903445">
    <property type="term" value="P:protein transport from ciliary membrane to plasma membrane"/>
    <property type="evidence" value="ECO:0000250"/>
    <property type="project" value="UniProtKB"/>
</dbReference>
<dbReference type="CDD" id="cd14445">
    <property type="entry name" value="RILP-like"/>
    <property type="match status" value="1"/>
</dbReference>
<dbReference type="FunFam" id="1.20.58.1770:FF:000002">
    <property type="entry name" value="RILP-like protein 1 isoform X1"/>
    <property type="match status" value="1"/>
</dbReference>
<dbReference type="Gene3D" id="1.20.58.1770">
    <property type="match status" value="1"/>
</dbReference>
<dbReference type="Gene3D" id="6.10.230.10">
    <property type="match status" value="1"/>
</dbReference>
<dbReference type="InterPro" id="IPR051241">
    <property type="entry name" value="DZIP_RILPL"/>
</dbReference>
<dbReference type="InterPro" id="IPR034743">
    <property type="entry name" value="RH1"/>
</dbReference>
<dbReference type="InterPro" id="IPR034744">
    <property type="entry name" value="RH2"/>
</dbReference>
<dbReference type="InterPro" id="IPR021563">
    <property type="entry name" value="RILP_dimer"/>
</dbReference>
<dbReference type="PANTHER" id="PTHR21502:SF6">
    <property type="entry name" value="RILP-LIKE PROTEIN 1"/>
    <property type="match status" value="1"/>
</dbReference>
<dbReference type="PANTHER" id="PTHR21502">
    <property type="entry name" value="ZINC FINGER PROTEIN DZIP1"/>
    <property type="match status" value="1"/>
</dbReference>
<dbReference type="Pfam" id="PF09744">
    <property type="entry name" value="RH1"/>
    <property type="match status" value="1"/>
</dbReference>
<dbReference type="Pfam" id="PF11461">
    <property type="entry name" value="RILP"/>
    <property type="match status" value="1"/>
</dbReference>
<dbReference type="SUPFAM" id="SSF161256">
    <property type="entry name" value="RILP dimerisation region"/>
    <property type="match status" value="1"/>
</dbReference>
<dbReference type="PROSITE" id="PS51776">
    <property type="entry name" value="RH1"/>
    <property type="match status" value="1"/>
</dbReference>
<dbReference type="PROSITE" id="PS51777">
    <property type="entry name" value="RH2"/>
    <property type="match status" value="1"/>
</dbReference>
<evidence type="ECO:0000250" key="1"/>
<evidence type="ECO:0000255" key="2"/>
<evidence type="ECO:0000255" key="3">
    <source>
        <dbReference type="PROSITE-ProRule" id="PRU01112"/>
    </source>
</evidence>
<evidence type="ECO:0000255" key="4">
    <source>
        <dbReference type="PROSITE-ProRule" id="PRU01113"/>
    </source>
</evidence>
<evidence type="ECO:0000305" key="5"/>
<accession>Q0IHE5</accession>
<name>RIPL1_XENLA</name>
<proteinExistence type="evidence at transcript level"/>
<reference key="1">
    <citation type="submission" date="2006-09" db="EMBL/GenBank/DDBJ databases">
        <authorList>
            <consortium name="NIH - Xenopus Gene Collection (XGC) project"/>
        </authorList>
    </citation>
    <scope>NUCLEOTIDE SEQUENCE [LARGE SCALE MRNA]</scope>
    <source>
        <tissue>Fat body</tissue>
    </source>
</reference>
<comment type="function">
    <text evidence="1">Plays a role in the regulation of cell shape and polarity. Plays a role in cellular protein transport, including protein transport away from primary cilia. Neuroprotective protein (By similarity).</text>
</comment>
<comment type="subcellular location">
    <subcellularLocation>
        <location evidence="1">Cytoplasm</location>
        <location evidence="1">Cytosol</location>
    </subcellularLocation>
    <subcellularLocation>
        <location evidence="1">Cytoplasm</location>
        <location evidence="1">Cytoskeleton</location>
        <location evidence="1">Microtubule organizing center</location>
        <location evidence="1">Centrosome</location>
    </subcellularLocation>
    <subcellularLocation>
        <location evidence="1">Cell projection</location>
        <location evidence="1">Cilium</location>
    </subcellularLocation>
</comment>
<comment type="similarity">
    <text evidence="5">Belongs to the RILPL family.</text>
</comment>
<protein>
    <recommendedName>
        <fullName>RILP-like protein 1</fullName>
    </recommendedName>
    <alternativeName>
        <fullName>Rab-interacting lysosomal-like protein 1</fullName>
    </alternativeName>
</protein>
<gene>
    <name type="primary">rilpl1</name>
</gene>
<organism>
    <name type="scientific">Xenopus laevis</name>
    <name type="common">African clawed frog</name>
    <dbReference type="NCBI Taxonomy" id="8355"/>
    <lineage>
        <taxon>Eukaryota</taxon>
        <taxon>Metazoa</taxon>
        <taxon>Chordata</taxon>
        <taxon>Craniata</taxon>
        <taxon>Vertebrata</taxon>
        <taxon>Euteleostomi</taxon>
        <taxon>Amphibia</taxon>
        <taxon>Batrachia</taxon>
        <taxon>Anura</taxon>
        <taxon>Pipoidea</taxon>
        <taxon>Pipidae</taxon>
        <taxon>Xenopodinae</taxon>
        <taxon>Xenopus</taxon>
        <taxon>Xenopus</taxon>
    </lineage>
</organism>
<sequence length="394" mass="46590">MEGISALEKNVAELTVMDVYDIASAVGQEFERVIDQYGCEVIGRLMPKVVRVLEILEVLVSRNHINPEMEELRLELDRLRLERMDRIEKEKKHLKELELVEDVWRGEAQDLLNQISQLQEENKQLLTNLSHKDVNLTEEEFQKHEGMSERERQVMKKLKEVVDKQRDEIRARDRELVLKNEDVEALQQQQSRLIKINHDLRHRVTVVEAQGKALIEQKVELEAYLQTKEQEAASMRIEIGKLRDKLKGEHHTNGEEIKTETLNEECIFETEKFSLDLKDSNRPRFTLQELRDVLHERNELKAKVFMLQEELAYYKSEEAEEENKLPQSLPVINSKAPIPQESGIKRLFSFFSRDKKRMPMMQKNVHFQESFGEWTNYNRDDVYTEQGQEALQHM</sequence>
<keyword id="KW-0966">Cell projection</keyword>
<keyword id="KW-0969">Cilium</keyword>
<keyword id="KW-0175">Coiled coil</keyword>
<keyword id="KW-0963">Cytoplasm</keyword>
<keyword id="KW-0206">Cytoskeleton</keyword>
<keyword id="KW-0653">Protein transport</keyword>
<keyword id="KW-1185">Reference proteome</keyword>
<keyword id="KW-0813">Transport</keyword>
<feature type="chain" id="PRO_0000299313" description="RILP-like protein 1">
    <location>
        <begin position="1"/>
        <end position="394"/>
    </location>
</feature>
<feature type="domain" description="RH1" evidence="3">
    <location>
        <begin position="2"/>
        <end position="89"/>
    </location>
</feature>
<feature type="domain" description="RH2" evidence="4">
    <location>
        <begin position="282"/>
        <end position="347"/>
    </location>
</feature>
<feature type="coiled-coil region" evidence="2">
    <location>
        <begin position="68"/>
        <end position="327"/>
    </location>
</feature>